<comment type="function">
    <text evidence="1">Involved in the removal of 5-formyltetrahydrofolate. In vitro, it is a potent inhibitor of various folate-dependent enzymes in the C1 metabolism network and in vivo it might function as a folate storage. 5-formyltetrahydrofolate is also used as an antifolate rescue agent in cancer chemotherapy. Catalyzes the irreversible ATP-dependent transformation of 5-formyltetrahydrofolate (5-CHO-THF) to form 5,10-methenyltetrahydrofolate (5,10-CH=THF). The reverse reaction is catalyzed by the serine hydroxymethyltransferase GlyA (SHMT) (By similarity).</text>
</comment>
<comment type="catalytic activity">
    <reaction>
        <text>(6S)-5-formyl-5,6,7,8-tetrahydrofolate + ATP = (6R)-5,10-methenyltetrahydrofolate + ADP + phosphate</text>
        <dbReference type="Rhea" id="RHEA:10488"/>
        <dbReference type="ChEBI" id="CHEBI:30616"/>
        <dbReference type="ChEBI" id="CHEBI:43474"/>
        <dbReference type="ChEBI" id="CHEBI:57455"/>
        <dbReference type="ChEBI" id="CHEBI:57457"/>
        <dbReference type="ChEBI" id="CHEBI:456216"/>
        <dbReference type="EC" id="6.3.3.2"/>
    </reaction>
</comment>
<comment type="pathway">
    <text>One-carbon metabolism; tetrahydrofolate interconversion.</text>
</comment>
<comment type="similarity">
    <text evidence="4">Belongs to the 5-formyltetrahydrofolate cyclo-ligase family.</text>
</comment>
<comment type="sequence caution" evidence="4">
    <conflict type="erroneous initiation">
        <sequence resource="EMBL-CDS" id="BAB37205"/>
    </conflict>
    <text>Extended N-terminus.</text>
</comment>
<accession>P0AC29</accession>
<accession>P09160</accession>
<sequence>MIRQRRRALTPEQQQEMGQQAATRMMTYPPVVMAHTVAVFLSFDGELDTQPLIEQLWRAGKRVYLPVLHPFSAGNLLFLNYHPQSELVMNRLKIHEPKLDVRDVLPLSRLDVLITPLVAFDEYGQRLGMGGGFYDRTLQNWQHYKTQPVGYAHDCQLVEKLPVEEWDIPLPAVVTPSKVWEW</sequence>
<dbReference type="EC" id="6.3.3.2"/>
<dbReference type="EMBL" id="AE005174">
    <property type="protein sequence ID" value="AAG58038.1"/>
    <property type="molecule type" value="Genomic_DNA"/>
</dbReference>
<dbReference type="EMBL" id="BA000007">
    <property type="protein sequence ID" value="BAB37205.2"/>
    <property type="status" value="ALT_INIT"/>
    <property type="molecule type" value="Genomic_DNA"/>
</dbReference>
<dbReference type="PIR" id="F91101">
    <property type="entry name" value="F91101"/>
</dbReference>
<dbReference type="RefSeq" id="NP_311809.3">
    <property type="nucleotide sequence ID" value="NC_002695.1"/>
</dbReference>
<dbReference type="SMR" id="P0AC29"/>
<dbReference type="STRING" id="155864.Z4249"/>
<dbReference type="KEGG" id="ece:Z4249"/>
<dbReference type="KEGG" id="ecs:ECs_3782"/>
<dbReference type="PATRIC" id="fig|386585.9.peg.3947"/>
<dbReference type="eggNOG" id="COG0212">
    <property type="taxonomic scope" value="Bacteria"/>
</dbReference>
<dbReference type="HOGENOM" id="CLU_066245_0_0_6"/>
<dbReference type="UniPathway" id="UPA00193"/>
<dbReference type="Proteomes" id="UP000000558">
    <property type="component" value="Chromosome"/>
</dbReference>
<dbReference type="Proteomes" id="UP000002519">
    <property type="component" value="Chromosome"/>
</dbReference>
<dbReference type="GO" id="GO:0030272">
    <property type="term" value="F:5-formyltetrahydrofolate cyclo-ligase activity"/>
    <property type="evidence" value="ECO:0007669"/>
    <property type="project" value="UniProtKB-EC"/>
</dbReference>
<dbReference type="GO" id="GO:0005524">
    <property type="term" value="F:ATP binding"/>
    <property type="evidence" value="ECO:0007669"/>
    <property type="project" value="UniProtKB-KW"/>
</dbReference>
<dbReference type="GO" id="GO:0009396">
    <property type="term" value="P:folic acid-containing compound biosynthetic process"/>
    <property type="evidence" value="ECO:0007669"/>
    <property type="project" value="TreeGrafter"/>
</dbReference>
<dbReference type="GO" id="GO:0035999">
    <property type="term" value="P:tetrahydrofolate interconversion"/>
    <property type="evidence" value="ECO:0007669"/>
    <property type="project" value="UniProtKB-UniPathway"/>
</dbReference>
<dbReference type="FunFam" id="3.40.50.10420:FF:000005">
    <property type="entry name" value="5-formyltetrahydrofolate cyclo-ligase"/>
    <property type="match status" value="1"/>
</dbReference>
<dbReference type="Gene3D" id="3.40.50.10420">
    <property type="entry name" value="NagB/RpiA/CoA transferase-like"/>
    <property type="match status" value="1"/>
</dbReference>
<dbReference type="InterPro" id="IPR002698">
    <property type="entry name" value="FTHF_cligase"/>
</dbReference>
<dbReference type="InterPro" id="IPR024185">
    <property type="entry name" value="FTHF_cligase-like_sf"/>
</dbReference>
<dbReference type="InterPro" id="IPR037171">
    <property type="entry name" value="NagB/RpiA_transferase-like"/>
</dbReference>
<dbReference type="NCBIfam" id="TIGR02727">
    <property type="entry name" value="MTHFS_bact"/>
    <property type="match status" value="1"/>
</dbReference>
<dbReference type="NCBIfam" id="NF007661">
    <property type="entry name" value="PRK10333.1"/>
    <property type="match status" value="1"/>
</dbReference>
<dbReference type="PANTHER" id="PTHR23407:SF1">
    <property type="entry name" value="5-FORMYLTETRAHYDROFOLATE CYCLO-LIGASE"/>
    <property type="match status" value="1"/>
</dbReference>
<dbReference type="PANTHER" id="PTHR23407">
    <property type="entry name" value="ATPASE INHIBITOR/5-FORMYLTETRAHYDROFOLATE CYCLO-LIGASE"/>
    <property type="match status" value="1"/>
</dbReference>
<dbReference type="Pfam" id="PF01812">
    <property type="entry name" value="5-FTHF_cyc-lig"/>
    <property type="match status" value="1"/>
</dbReference>
<dbReference type="PIRSF" id="PIRSF006806">
    <property type="entry name" value="FTHF_cligase"/>
    <property type="match status" value="1"/>
</dbReference>
<dbReference type="SUPFAM" id="SSF100950">
    <property type="entry name" value="NagB/RpiA/CoA transferase-like"/>
    <property type="match status" value="1"/>
</dbReference>
<evidence type="ECO:0000250" key="1"/>
<evidence type="ECO:0000255" key="2"/>
<evidence type="ECO:0000256" key="3">
    <source>
        <dbReference type="SAM" id="MobiDB-lite"/>
    </source>
</evidence>
<evidence type="ECO:0000305" key="4"/>
<name>5FCL_ECO57</name>
<gene>
    <name type="primary">ygfA</name>
    <name type="ordered locus">Z4249</name>
    <name type="ordered locus">ECs3782</name>
</gene>
<reference key="1">
    <citation type="journal article" date="2001" name="Nature">
        <title>Genome sequence of enterohaemorrhagic Escherichia coli O157:H7.</title>
        <authorList>
            <person name="Perna N.T."/>
            <person name="Plunkett G. III"/>
            <person name="Burland V."/>
            <person name="Mau B."/>
            <person name="Glasner J.D."/>
            <person name="Rose D.J."/>
            <person name="Mayhew G.F."/>
            <person name="Evans P.S."/>
            <person name="Gregor J."/>
            <person name="Kirkpatrick H.A."/>
            <person name="Posfai G."/>
            <person name="Hackett J."/>
            <person name="Klink S."/>
            <person name="Boutin A."/>
            <person name="Shao Y."/>
            <person name="Miller L."/>
            <person name="Grotbeck E.J."/>
            <person name="Davis N.W."/>
            <person name="Lim A."/>
            <person name="Dimalanta E.T."/>
            <person name="Potamousis K."/>
            <person name="Apodaca J."/>
            <person name="Anantharaman T.S."/>
            <person name="Lin J."/>
            <person name="Yen G."/>
            <person name="Schwartz D.C."/>
            <person name="Welch R.A."/>
            <person name="Blattner F.R."/>
        </authorList>
    </citation>
    <scope>NUCLEOTIDE SEQUENCE [LARGE SCALE GENOMIC DNA]</scope>
    <source>
        <strain>O157:H7 / EDL933 / ATCC 700927 / EHEC</strain>
    </source>
</reference>
<reference key="2">
    <citation type="journal article" date="2001" name="DNA Res.">
        <title>Complete genome sequence of enterohemorrhagic Escherichia coli O157:H7 and genomic comparison with a laboratory strain K-12.</title>
        <authorList>
            <person name="Hayashi T."/>
            <person name="Makino K."/>
            <person name="Ohnishi M."/>
            <person name="Kurokawa K."/>
            <person name="Ishii K."/>
            <person name="Yokoyama K."/>
            <person name="Han C.-G."/>
            <person name="Ohtsubo E."/>
            <person name="Nakayama K."/>
            <person name="Murata T."/>
            <person name="Tanaka M."/>
            <person name="Tobe T."/>
            <person name="Iida T."/>
            <person name="Takami H."/>
            <person name="Honda T."/>
            <person name="Sasakawa C."/>
            <person name="Ogasawara N."/>
            <person name="Yasunaga T."/>
            <person name="Kuhara S."/>
            <person name="Shiba T."/>
            <person name="Hattori M."/>
            <person name="Shinagawa H."/>
        </authorList>
    </citation>
    <scope>NUCLEOTIDE SEQUENCE [LARGE SCALE GENOMIC DNA]</scope>
    <source>
        <strain>O157:H7 / Sakai / RIMD 0509952 / EHEC</strain>
    </source>
</reference>
<feature type="chain" id="PRO_0000200285" description="5-formyltetrahydrofolate cyclo-ligase">
    <location>
        <begin position="1"/>
        <end position="182"/>
    </location>
</feature>
<feature type="region of interest" description="Disordered" evidence="3">
    <location>
        <begin position="1"/>
        <end position="21"/>
    </location>
</feature>
<feature type="compositionally biased region" description="Polar residues" evidence="3">
    <location>
        <begin position="11"/>
        <end position="21"/>
    </location>
</feature>
<feature type="binding site" evidence="2">
    <location>
        <begin position="128"/>
        <end position="135"/>
    </location>
    <ligand>
        <name>ATP</name>
        <dbReference type="ChEBI" id="CHEBI:30616"/>
    </ligand>
</feature>
<feature type="binding site" evidence="2">
    <location>
        <position position="167"/>
    </location>
    <ligand>
        <name>ATP</name>
        <dbReference type="ChEBI" id="CHEBI:30616"/>
    </ligand>
</feature>
<keyword id="KW-0067">ATP-binding</keyword>
<keyword id="KW-0436">Ligase</keyword>
<keyword id="KW-0547">Nucleotide-binding</keyword>
<keyword id="KW-1185">Reference proteome</keyword>
<proteinExistence type="inferred from homology"/>
<protein>
    <recommendedName>
        <fullName>5-formyltetrahydrofolate cyclo-ligase</fullName>
        <shortName>5-FCL</shortName>
        <ecNumber>6.3.3.2</ecNumber>
    </recommendedName>
    <alternativeName>
        <fullName>5,10-methenyltetrahydrofolate synthetase</fullName>
        <shortName>MTHFS</shortName>
    </alternativeName>
</protein>
<organism>
    <name type="scientific">Escherichia coli O157:H7</name>
    <dbReference type="NCBI Taxonomy" id="83334"/>
    <lineage>
        <taxon>Bacteria</taxon>
        <taxon>Pseudomonadati</taxon>
        <taxon>Pseudomonadota</taxon>
        <taxon>Gammaproteobacteria</taxon>
        <taxon>Enterobacterales</taxon>
        <taxon>Enterobacteriaceae</taxon>
        <taxon>Escherichia</taxon>
    </lineage>
</organism>